<comment type="function">
    <text evidence="1">Specifically methylates the N7 position of guanine in position 535 of 16S rRNA.</text>
</comment>
<comment type="subcellular location">
    <subcellularLocation>
        <location evidence="1">Cytoplasm</location>
    </subcellularLocation>
</comment>
<comment type="similarity">
    <text evidence="1">Belongs to the methyltransferase superfamily. RNA methyltransferase RsmG family.</text>
</comment>
<gene>
    <name evidence="1" type="primary">rsmG</name>
    <name type="ordered locus">SA2499</name>
</gene>
<feature type="chain" id="PRO_0000184333" description="Ribosomal RNA small subunit methyltransferase G">
    <location>
        <begin position="1"/>
        <end position="239"/>
    </location>
</feature>
<feature type="region of interest" description="Disordered" evidence="2">
    <location>
        <begin position="214"/>
        <end position="239"/>
    </location>
</feature>
<feature type="binding site" evidence="1">
    <location>
        <position position="77"/>
    </location>
    <ligand>
        <name>S-adenosyl-L-methionine</name>
        <dbReference type="ChEBI" id="CHEBI:59789"/>
    </ligand>
</feature>
<feature type="binding site" evidence="1">
    <location>
        <position position="82"/>
    </location>
    <ligand>
        <name>S-adenosyl-L-methionine</name>
        <dbReference type="ChEBI" id="CHEBI:59789"/>
    </ligand>
</feature>
<feature type="binding site" evidence="1">
    <location>
        <begin position="128"/>
        <end position="129"/>
    </location>
    <ligand>
        <name>S-adenosyl-L-methionine</name>
        <dbReference type="ChEBI" id="CHEBI:59789"/>
    </ligand>
</feature>
<feature type="binding site" evidence="1">
    <location>
        <position position="146"/>
    </location>
    <ligand>
        <name>S-adenosyl-L-methionine</name>
        <dbReference type="ChEBI" id="CHEBI:59789"/>
    </ligand>
</feature>
<name>RSMG_STAAN</name>
<evidence type="ECO:0000255" key="1">
    <source>
        <dbReference type="HAMAP-Rule" id="MF_00074"/>
    </source>
</evidence>
<evidence type="ECO:0000256" key="2">
    <source>
        <dbReference type="SAM" id="MobiDB-lite"/>
    </source>
</evidence>
<organism>
    <name type="scientific">Staphylococcus aureus (strain N315)</name>
    <dbReference type="NCBI Taxonomy" id="158879"/>
    <lineage>
        <taxon>Bacteria</taxon>
        <taxon>Bacillati</taxon>
        <taxon>Bacillota</taxon>
        <taxon>Bacilli</taxon>
        <taxon>Bacillales</taxon>
        <taxon>Staphylococcaceae</taxon>
        <taxon>Staphylococcus</taxon>
    </lineage>
</organism>
<dbReference type="EC" id="2.1.1.-" evidence="1"/>
<dbReference type="EMBL" id="BA000018">
    <property type="protein sequence ID" value="BAB43807.1"/>
    <property type="molecule type" value="Genomic_DNA"/>
</dbReference>
<dbReference type="PIR" id="E90080">
    <property type="entry name" value="E90080"/>
</dbReference>
<dbReference type="RefSeq" id="WP_000215587.1">
    <property type="nucleotide sequence ID" value="NC_002745.2"/>
</dbReference>
<dbReference type="SMR" id="P64240"/>
<dbReference type="EnsemblBacteria" id="BAB43807">
    <property type="protein sequence ID" value="BAB43807"/>
    <property type="gene ID" value="BAB43807"/>
</dbReference>
<dbReference type="KEGG" id="sau:SA2499"/>
<dbReference type="HOGENOM" id="CLU_065341_0_0_9"/>
<dbReference type="GO" id="GO:0005829">
    <property type="term" value="C:cytosol"/>
    <property type="evidence" value="ECO:0007669"/>
    <property type="project" value="TreeGrafter"/>
</dbReference>
<dbReference type="GO" id="GO:0070043">
    <property type="term" value="F:rRNA (guanine-N7-)-methyltransferase activity"/>
    <property type="evidence" value="ECO:0007669"/>
    <property type="project" value="UniProtKB-UniRule"/>
</dbReference>
<dbReference type="CDD" id="cd02440">
    <property type="entry name" value="AdoMet_MTases"/>
    <property type="match status" value="1"/>
</dbReference>
<dbReference type="FunFam" id="3.40.50.150:FF:000041">
    <property type="entry name" value="Ribosomal RNA small subunit methyltransferase G"/>
    <property type="match status" value="1"/>
</dbReference>
<dbReference type="Gene3D" id="3.40.50.150">
    <property type="entry name" value="Vaccinia Virus protein VP39"/>
    <property type="match status" value="1"/>
</dbReference>
<dbReference type="HAMAP" id="MF_00074">
    <property type="entry name" value="16SrRNA_methyltr_G"/>
    <property type="match status" value="1"/>
</dbReference>
<dbReference type="InterPro" id="IPR003682">
    <property type="entry name" value="rRNA_ssu_MeTfrase_G"/>
</dbReference>
<dbReference type="InterPro" id="IPR029063">
    <property type="entry name" value="SAM-dependent_MTases_sf"/>
</dbReference>
<dbReference type="NCBIfam" id="TIGR00138">
    <property type="entry name" value="rsmG_gidB"/>
    <property type="match status" value="1"/>
</dbReference>
<dbReference type="PANTHER" id="PTHR31760">
    <property type="entry name" value="S-ADENOSYL-L-METHIONINE-DEPENDENT METHYLTRANSFERASES SUPERFAMILY PROTEIN"/>
    <property type="match status" value="1"/>
</dbReference>
<dbReference type="PANTHER" id="PTHR31760:SF0">
    <property type="entry name" value="S-ADENOSYL-L-METHIONINE-DEPENDENT METHYLTRANSFERASES SUPERFAMILY PROTEIN"/>
    <property type="match status" value="1"/>
</dbReference>
<dbReference type="Pfam" id="PF02527">
    <property type="entry name" value="GidB"/>
    <property type="match status" value="1"/>
</dbReference>
<dbReference type="PIRSF" id="PIRSF003078">
    <property type="entry name" value="GidB"/>
    <property type="match status" value="1"/>
</dbReference>
<dbReference type="SUPFAM" id="SSF53335">
    <property type="entry name" value="S-adenosyl-L-methionine-dependent methyltransferases"/>
    <property type="match status" value="1"/>
</dbReference>
<keyword id="KW-0963">Cytoplasm</keyword>
<keyword id="KW-0489">Methyltransferase</keyword>
<keyword id="KW-0698">rRNA processing</keyword>
<keyword id="KW-0949">S-adenosyl-L-methionine</keyword>
<keyword id="KW-0808">Transferase</keyword>
<reference key="1">
    <citation type="journal article" date="2001" name="Lancet">
        <title>Whole genome sequencing of meticillin-resistant Staphylococcus aureus.</title>
        <authorList>
            <person name="Kuroda M."/>
            <person name="Ohta T."/>
            <person name="Uchiyama I."/>
            <person name="Baba T."/>
            <person name="Yuzawa H."/>
            <person name="Kobayashi I."/>
            <person name="Cui L."/>
            <person name="Oguchi A."/>
            <person name="Aoki K."/>
            <person name="Nagai Y."/>
            <person name="Lian J.-Q."/>
            <person name="Ito T."/>
            <person name="Kanamori M."/>
            <person name="Matsumaru H."/>
            <person name="Maruyama A."/>
            <person name="Murakami H."/>
            <person name="Hosoyama A."/>
            <person name="Mizutani-Ui Y."/>
            <person name="Takahashi N.K."/>
            <person name="Sawano T."/>
            <person name="Inoue R."/>
            <person name="Kaito C."/>
            <person name="Sekimizu K."/>
            <person name="Hirakawa H."/>
            <person name="Kuhara S."/>
            <person name="Goto S."/>
            <person name="Yabuzaki J."/>
            <person name="Kanehisa M."/>
            <person name="Yamashita A."/>
            <person name="Oshima K."/>
            <person name="Furuya K."/>
            <person name="Yoshino C."/>
            <person name="Shiba T."/>
            <person name="Hattori M."/>
            <person name="Ogasawara N."/>
            <person name="Hayashi H."/>
            <person name="Hiramatsu K."/>
        </authorList>
    </citation>
    <scope>NUCLEOTIDE SEQUENCE [LARGE SCALE GENOMIC DNA]</scope>
    <source>
        <strain>N315</strain>
    </source>
</reference>
<sequence length="239" mass="27373">MTVEWLAEQLKEHNIELTETQKQQFQTYYRLLVEWNEKMNLTSITDEHDVYLKHFYDSIAPSFYFDFNQPISICDVGAGAGFPSIPLKIMFPQLKVTIVDSLNKRIQFLNHLASELQLQDVSFIHDRAETFGKGVYRESYDVVTARAVARLSVLSELCLPLIKKGGQFVALKSSKGEEELEEAKFAISVLGGNVTETHTFKLPEDAGERQMFIIDKKRQTPKKYPRKPGTPNKTPLLEK</sequence>
<proteinExistence type="inferred from homology"/>
<accession>P64240</accession>
<accession>Q99QT5</accession>
<protein>
    <recommendedName>
        <fullName evidence="1">Ribosomal RNA small subunit methyltransferase G</fullName>
        <ecNumber evidence="1">2.1.1.-</ecNumber>
    </recommendedName>
    <alternativeName>
        <fullName evidence="1">16S rRNA 7-methylguanosine methyltransferase</fullName>
        <shortName evidence="1">16S rRNA m7G methyltransferase</shortName>
    </alternativeName>
</protein>